<accession>E0D206</accession>
<gene>
    <name evidence="10" type="primary">gfsE</name>
</gene>
<sequence length="3799" mass="399110">MTNEDKLRDYLNRVMGELRQSRARLSESEARDHEPIAIIGMSCRFPDGVRSPEDLWRVLVDERHCLTDFPADRGWDLDALYHPDPGHSGTSYTRKGGFLHEAAGFDPEFFGISPREALAMDPQQRLLLETSWEVWERAGLDPAAMRGSRTGVFIGSNDLDYATRLRSVPDGVEGYLATGNLASVLSGRLSYTFGLEGPAVTVDTACSSSLVAMHLAAKALRSDECSLAMVGGVSVMAAPGTFLEFSRQRGLAQDGLCKAFADAADGTGMAEGVGVLLLERLSDARRNGHEVLAVLRGSAVNQDGASNGLTAPNGPSQEQVIRQALDNARLTPDSVDVVEAHGTGTRLGDPIEAEALLATYGQDRPEERPLWLGSVKSNIGHTQAAAGVAGVIKMVMALRQETLPATLHVDRPSTQVDWSSGAVSLLTEARPWARNGRPRRAGVSSFGVSGTNAHAILEEAPAATGNPTEADTDQEPAASASPDRTTTLPAVPWPLSGHTPEALRAQARRLHDTLTTVADGEPQPSPLDLGWSLATTRSTHRHRAVVVGADLPHLLQGVDALASGTPAPHLVRGVAGDTRTAFVFPGQGSQWAGMARELADSSPVFAERLRACEEALAPHVDWSLREVLDGSDLEKADVVQPVLWAVMVSLAALWESHGVRPDAVVGHSQGEIAAACVADALSLEDGARVVALRSRALGVLAGRGGMASLALSAEETTARLAAYKDRLSIAAVNGPHSTVVSGDVEPLHELVAACEADGVRARIVPVDYASHSAHVEEIHDTLLELLAPVTPRPSRVPFFSTVTGEWIDTTVMDAAYWYRNLRRTVQFDVATRTLIAEGFGLLIEASPHPVLAIGMQESVEAAAANCAVLGTLRRGEGGLDRYLLSLGEAHAHGADVDWPAVFAGTGAERVELPTYAFQRRRFWLDGGRDGAGGVASAGLASAGHPLFGAVVEVAGGDRTLLSGRLSVLSHPWLADHSVRGVVLVPGAAFVELALCAGERVGCGAVEELTLQAPLVLPVEGAVQVQFAVEAPDERGHRAFTVYGRSDEAAEPDAWQEYASGVLELEARPEPEGLAQWPPADAEVVPVEGLYDLLGGLGYEYGPAFQGLRRVWRRGEELFAEVSLAEELDGQADQFGIHPALLDGALQTSAVALLQHGGEAAEVRLPFAWRGVSLFATGASAARVRLSPAGQDAVSVLVADQDGVPVARVEGLVSRPVAEEQLGAGGGVGRDSLFGVEWVPFAGGDSDALAADVLEVHRFDGLVQDPQGVREAIERALGLIQGWLARERPRGSRLVVVTRGAVGGEVSDLAGAAVWGLVRSAQSEHPGQFVLVDTDGDALAGLPADEPHVMVREGQVLVPRLARVVPATEGGAGGVVWDPEKSLLVTGASGVLAGLVVRHAVAEWAVRHVVLVSRSGADGLAQELAEAGVSVQQARCDVADREAVAAVLAGIPAEHRLGGVIHTAGVLDDGVIESLTPERLEPVLRPKVDGAWWLHELTADVDLSVFAVFSSAAGVFGAAGQGNYAAANAFLDALALYRHREGLPATSLSWGLWAERSGLTGRLAESDLGRLSRQGVLPLSSEQGVALLDAVLATGRPWLVPARLDLGILRTSDQPVPPLLRGLVRRITRRAVTAGANGADSFVQRIAGLSPAEAERAVLELVCGEAAAVLGYASAGAVAPGQAFRELGFDSLTAVELRNRLNGATGLRLPATLIFDYPTPTALATHIRSSAAGTTTGPTAPVAIAGTAVDEAIAIVGMACRYPGGVASPEDLWRLVADEADAVSRFPQDRGWDLDALFDPERPGGTSLTREGGFLYDADQFDAAFFGISPREALAMDPQQRLLLETSWEALERAGIDPATLRGSATGVFAGVMYHDYGTRVLHVPEEVEGYLGNGNAGSIASGRVAYTFGLEGPAVTVDTACSSSLVTLHLASQALRQGECSLALAGGVTVLATPGVFTEFTRQRGLAEDGRCKAFAAAADGTGWGEGVGMLLLERLSDAERNGHPILAVVRGSAVNQDGASNGLTAPNGPSQQRVIRQALANARLTPADIDLVEAHGTGTRLGDPIEAQALLATYGQDRPEGEPAWLGSVKSNIGHTQAAAGVAGVIKSVMAIRNGVLPASLHVDEPTPEVDWDAGAVELLTEARPWPTTDRPRRAAVSSFGASGTNAHVILEQAADTGPVHAHEGDTTPPSVIAWPISGRDEQALREQAARLGAFVGADASLSAADVGNSLARTRASFEHRAVVVGRDRDELLAGVQALAAGEAAANVVTGRAPAEGAGRVAFVFPGQGSQWIGMGLELAEQSPVFAAALEECGQALAEHVDWDGRSLHEVLRQAEGAPSLERVDVVQPALWAVMVALAAAWRSYGIEPDAVVGHSQGEIAAACVAGVLSVEDGARVVAVRSRAITALAGRGQMVSVPLPEADTVELIRPWADDGQIAVAAVNGPASTVISGDSQAVDALLEKLDAQEIRARRIPVDYASHSPQVALIHDELLRVLDGLTPRAGTVPLFSTVTGQWLGATPMDADYWYRNLRETVRFEAGTRALAAEGWGVFVEASPHPVLTLGIQETLEALDHRGVVTGSLRRQEGGQDRLFVSLAKVHTHGGGPLDRPAFHTGTGAPRVDLPTYAFQRRRYWLEAPAGVPGDLSAAGLQTLEHPLLTGVVDLADEQRTVFTGRLSPATHPWLADHAVFGSVLLPGTGFVELALAAGEHVGHGHLDELTLHAPLFLPEEGAVHLQLVLDGPDTSGRRAVTIHSRAEDEAGGQEWTRHAGGTLAVDADHDTPPALTSWPPADADPVDLTEVYDRFAAAGYAYGPAFQGLRRVWRRDGELFAEVELAGPERDAARRFGVHPALLDAALHPLLLGHGAPQTESEGQGRLPFSWTGVSLRATGATTVRVRLTTDDADTVAVTVTDTAGTPVASVDALVTRPVTAAQFAAGRPSGQSGLFEVEWAPVPTPAAGTASWAVLGGGEVGGVGLGSYDDLAALRRAVDSGAPVPEVVLTFCGGRSETAVVPGTHTATREALALLHEWLADERFAGARLAVVTSGAVAAGPDDEVTDLAAAAVWGLVRSAQSEHPGRFVLLDVDGRAVAGAAVPTALATGEPQVAVRGGELLVPRLARAAKAREVGRDAAGVVWDPEKSLLVTGASGVLAGLTVRHAVSVWGVRHVVLLSRGGADALAQELSEVGVSVRQARCDVADREAVAAVLADIPAAHPLGGVIHTAGVLDDGVIESLTPERLEPVLRPKVDGAWWLHELTAGLDLSVFALFASGAGVFGAAGQGNYAAANAFLDALALHRSRKGLPATALSWGLWAERSGLTGQLTDAELNRMTHHGVLPLSSEQGLALLDSALATDRPWFVPVRIDLGAVRRTGFDHPLLRGLVRVPSRRTVAALDNGTPATDPASLWGRLVALSPAEQEAALLDLVGAQAAAVLGHTDPEQVTTDRPFLDLGFDSLTGVELRNRLTAATGLRLPTTLVFKHRTPAALAAQLRTDLVAVHTDGSGTDTAAPVEAARVPTNGGGTAEAFGELFVEAYRQGRSEEFFRLLRLASEFRPTFDAVRARESVPEPVRLAEGPAEGPDGPMLVCFPSVVGPSGPHQYARFAGPLRDRREVWAVAPPGFVQGELLPKDLATYTDATADAVARRVGETPFVLVGYSSGGWLAHAVASRMEEQGAAPAGVVLLDTYLPEGVVGQLGPELVGGLLERREKFRFDFGDDVWLTAMGGYFRLFDHWRPAAIKAPSLLVRSSEPMPGVPSDTDWRSRWDLPHTAVDVPGNHYTLMEDHAAETARAVRDWVGSLS</sequence>
<feature type="chain" id="PRO_0000461667" description="Polyketide synthase GfsE">
    <location>
        <begin position="1"/>
        <end position="3799"/>
    </location>
</feature>
<feature type="domain" description="Ketosynthase family 3 (KS3) 1" evidence="4">
    <location>
        <begin position="33"/>
        <end position="459"/>
    </location>
</feature>
<feature type="domain" description="Malonyl-CoA:ACP transacylase (MAT) 1" evidence="2">
    <location>
        <begin position="582"/>
        <end position="895"/>
    </location>
</feature>
<feature type="domain" description="PKS/mFAS DH 1" evidence="5">
    <location>
        <begin position="944"/>
        <end position="1222"/>
    </location>
</feature>
<feature type="domain" description="Ketoreductase (KR) 1" evidence="2">
    <location>
        <begin position="1382"/>
        <end position="1554"/>
    </location>
</feature>
<feature type="domain" description="Carrier 1" evidence="3">
    <location>
        <begin position="1652"/>
        <end position="1730"/>
    </location>
</feature>
<feature type="domain" description="Ketosynthase family 3 (KS3) 2" evidence="4">
    <location>
        <begin position="1749"/>
        <end position="2174"/>
    </location>
</feature>
<feature type="domain" description="Malonyl-CoA:ACP transacylase (MAT) 2" evidence="2">
    <location>
        <begin position="2284"/>
        <end position="2604"/>
    </location>
</feature>
<feature type="domain" description="PKS/mFAS DH 2" evidence="5">
    <location>
        <begin position="2656"/>
        <end position="2936"/>
    </location>
</feature>
<feature type="domain" description="Ketoreductase (KR) 2" evidence="2">
    <location>
        <begin position="3142"/>
        <end position="3314"/>
    </location>
</feature>
<feature type="domain" description="Carrier 2" evidence="3">
    <location>
        <begin position="3419"/>
        <end position="3494"/>
    </location>
</feature>
<feature type="region of interest" description="Module 11" evidence="12">
    <location>
        <begin position="33"/>
        <end position="1730"/>
    </location>
</feature>
<feature type="region of interest" description="Disordered" evidence="6">
    <location>
        <begin position="462"/>
        <end position="496"/>
    </location>
</feature>
<feature type="region of interest" description="N-terminal hotdog fold 1" evidence="5">
    <location>
        <begin position="944"/>
        <end position="1069"/>
    </location>
</feature>
<feature type="region of interest" description="C-terminal hotdog fold 1" evidence="5">
    <location>
        <begin position="1081"/>
        <end position="1222"/>
    </location>
</feature>
<feature type="region of interest" description="Module 12" evidence="12">
    <location>
        <begin position="1749"/>
        <end position="3494"/>
    </location>
</feature>
<feature type="region of interest" description="N-terminal hotdog fold 2" evidence="5">
    <location>
        <begin position="2656"/>
        <end position="2781"/>
    </location>
</feature>
<feature type="region of interest" description="C-terminal hotdog fold 2" evidence="5">
    <location>
        <begin position="2794"/>
        <end position="2936"/>
    </location>
</feature>
<feature type="active site" description="For beta-ketoacyl synthase 1 activity" evidence="4">
    <location>
        <position position="206"/>
    </location>
</feature>
<feature type="active site" description="For beta-ketoacyl synthase 1 activity" evidence="4">
    <location>
        <position position="341"/>
    </location>
</feature>
<feature type="active site" description="For beta-ketoacyl synthase 1 activity" evidence="4">
    <location>
        <position position="381"/>
    </location>
</feature>
<feature type="active site" description="Proton acceptor; for dehydratase activity 1" evidence="5">
    <location>
        <position position="976"/>
    </location>
</feature>
<feature type="active site" description="Proton donor; for dehydratase activity 1" evidence="5">
    <location>
        <position position="1142"/>
    </location>
</feature>
<feature type="active site" description="For beta-ketoacyl synthase 2 activity" evidence="4">
    <location>
        <position position="1921"/>
    </location>
</feature>
<feature type="active site" description="For beta-ketoacyl synthase 2 activity" evidence="4">
    <location>
        <position position="2056"/>
    </location>
</feature>
<feature type="active site" description="For beta-ketoacyl synthase 2 activity" evidence="4">
    <location>
        <position position="2096"/>
    </location>
</feature>
<feature type="active site" description="Proton acceptor; for dehydratase activity 2" evidence="5">
    <location>
        <position position="2688"/>
    </location>
</feature>
<feature type="active site" description="Proton donor; for dehydratase activity 2" evidence="5">
    <location>
        <position position="2855"/>
    </location>
</feature>
<feature type="modified residue" description="O-(pantetheine 4'-phosphoryl)serine" evidence="3">
    <location>
        <position position="1690"/>
    </location>
</feature>
<feature type="modified residue" description="O-(pantetheine 4'-phosphoryl)serine" evidence="3">
    <location>
        <position position="3454"/>
    </location>
</feature>
<evidence type="ECO:0000250" key="1">
    <source>
        <dbReference type="UniProtKB" id="I6XD69"/>
    </source>
</evidence>
<evidence type="ECO:0000255" key="2"/>
<evidence type="ECO:0000255" key="3">
    <source>
        <dbReference type="PROSITE-ProRule" id="PRU00258"/>
    </source>
</evidence>
<evidence type="ECO:0000255" key="4">
    <source>
        <dbReference type="PROSITE-ProRule" id="PRU01348"/>
    </source>
</evidence>
<evidence type="ECO:0000255" key="5">
    <source>
        <dbReference type="PROSITE-ProRule" id="PRU01363"/>
    </source>
</evidence>
<evidence type="ECO:0000256" key="6">
    <source>
        <dbReference type="SAM" id="MobiDB-lite"/>
    </source>
</evidence>
<evidence type="ECO:0000269" key="7">
    <source>
    </source>
</evidence>
<evidence type="ECO:0000269" key="8">
    <source>
    </source>
</evidence>
<evidence type="ECO:0000269" key="9">
    <source ref="4"/>
</evidence>
<evidence type="ECO:0000303" key="10">
    <source>
    </source>
</evidence>
<evidence type="ECO:0000305" key="11"/>
<evidence type="ECO:0000305" key="12">
    <source>
    </source>
</evidence>
<evidence type="ECO:0000312" key="13">
    <source>
        <dbReference type="EMBL" id="BAJ16471.1"/>
    </source>
</evidence>
<organism>
    <name type="scientific">Streptomyces halstedii</name>
    <dbReference type="NCBI Taxonomy" id="1944"/>
    <lineage>
        <taxon>Bacteria</taxon>
        <taxon>Bacillati</taxon>
        <taxon>Actinomycetota</taxon>
        <taxon>Actinomycetes</taxon>
        <taxon>Kitasatosporales</taxon>
        <taxon>Streptomycetaceae</taxon>
        <taxon>Streptomyces</taxon>
    </lineage>
</organism>
<proteinExistence type="evidence at protein level"/>
<dbReference type="EC" id="2.3.1.-" evidence="1"/>
<dbReference type="EMBL" id="AB469193">
    <property type="protein sequence ID" value="BAJ16471.1"/>
    <property type="molecule type" value="Genomic_DNA"/>
</dbReference>
<dbReference type="GO" id="GO:0004315">
    <property type="term" value="F:3-oxoacyl-[acyl-carrier-protein] synthase activity"/>
    <property type="evidence" value="ECO:0007669"/>
    <property type="project" value="InterPro"/>
</dbReference>
<dbReference type="GO" id="GO:0004312">
    <property type="term" value="F:fatty acid synthase activity"/>
    <property type="evidence" value="ECO:0007669"/>
    <property type="project" value="TreeGrafter"/>
</dbReference>
<dbReference type="GO" id="GO:0031177">
    <property type="term" value="F:phosphopantetheine binding"/>
    <property type="evidence" value="ECO:0007669"/>
    <property type="project" value="InterPro"/>
</dbReference>
<dbReference type="GO" id="GO:0006633">
    <property type="term" value="P:fatty acid biosynthetic process"/>
    <property type="evidence" value="ECO:0007669"/>
    <property type="project" value="InterPro"/>
</dbReference>
<dbReference type="GO" id="GO:0033068">
    <property type="term" value="P:macrolide biosynthetic process"/>
    <property type="evidence" value="ECO:0007669"/>
    <property type="project" value="UniProtKB-ARBA"/>
</dbReference>
<dbReference type="GO" id="GO:0046189">
    <property type="term" value="P:phenol-containing compound biosynthetic process"/>
    <property type="evidence" value="ECO:0007669"/>
    <property type="project" value="UniProtKB-ARBA"/>
</dbReference>
<dbReference type="GO" id="GO:0009403">
    <property type="term" value="P:toxin biosynthetic process"/>
    <property type="evidence" value="ECO:0007669"/>
    <property type="project" value="UniProtKB-ARBA"/>
</dbReference>
<dbReference type="CDD" id="cd08956">
    <property type="entry name" value="KR_3_FAS_SDR_x"/>
    <property type="match status" value="2"/>
</dbReference>
<dbReference type="CDD" id="cd00833">
    <property type="entry name" value="PKS"/>
    <property type="match status" value="2"/>
</dbReference>
<dbReference type="FunFam" id="3.40.47.10:FF:000019">
    <property type="entry name" value="Polyketide synthase type I"/>
    <property type="match status" value="2"/>
</dbReference>
<dbReference type="FunFam" id="3.40.366.10:FF:000002">
    <property type="entry name" value="Probable polyketide synthase 2"/>
    <property type="match status" value="2"/>
</dbReference>
<dbReference type="FunFam" id="1.10.1200.10:FF:000007">
    <property type="entry name" value="Probable polyketide synthase pks17"/>
    <property type="match status" value="2"/>
</dbReference>
<dbReference type="Gene3D" id="3.30.70.3290">
    <property type="match status" value="2"/>
</dbReference>
<dbReference type="Gene3D" id="3.40.47.10">
    <property type="match status" value="2"/>
</dbReference>
<dbReference type="Gene3D" id="1.10.1200.10">
    <property type="entry name" value="ACP-like"/>
    <property type="match status" value="2"/>
</dbReference>
<dbReference type="Gene3D" id="3.40.50.1820">
    <property type="entry name" value="alpha/beta hydrolase"/>
    <property type="match status" value="1"/>
</dbReference>
<dbReference type="Gene3D" id="3.40.366.10">
    <property type="entry name" value="Malonyl-Coenzyme A Acyl Carrier Protein, domain 2"/>
    <property type="match status" value="2"/>
</dbReference>
<dbReference type="Gene3D" id="3.40.50.720">
    <property type="entry name" value="NAD(P)-binding Rossmann-like Domain"/>
    <property type="match status" value="2"/>
</dbReference>
<dbReference type="Gene3D" id="3.10.129.110">
    <property type="entry name" value="Polyketide synthase dehydratase"/>
    <property type="match status" value="2"/>
</dbReference>
<dbReference type="InterPro" id="IPR029058">
    <property type="entry name" value="AB_hydrolase_fold"/>
</dbReference>
<dbReference type="InterPro" id="IPR001227">
    <property type="entry name" value="Ac_transferase_dom_sf"/>
</dbReference>
<dbReference type="InterPro" id="IPR036736">
    <property type="entry name" value="ACP-like_sf"/>
</dbReference>
<dbReference type="InterPro" id="IPR014043">
    <property type="entry name" value="Acyl_transferase_dom"/>
</dbReference>
<dbReference type="InterPro" id="IPR016035">
    <property type="entry name" value="Acyl_Trfase/lysoPLipase"/>
</dbReference>
<dbReference type="InterPro" id="IPR018201">
    <property type="entry name" value="Ketoacyl_synth_AS"/>
</dbReference>
<dbReference type="InterPro" id="IPR014031">
    <property type="entry name" value="Ketoacyl_synth_C"/>
</dbReference>
<dbReference type="InterPro" id="IPR014030">
    <property type="entry name" value="Ketoacyl_synth_N"/>
</dbReference>
<dbReference type="InterPro" id="IPR016036">
    <property type="entry name" value="Malonyl_transacylase_ACP-bd"/>
</dbReference>
<dbReference type="InterPro" id="IPR036291">
    <property type="entry name" value="NAD(P)-bd_dom_sf"/>
</dbReference>
<dbReference type="InterPro" id="IPR015083">
    <property type="entry name" value="NorB/c/GfsB-D-like_docking"/>
</dbReference>
<dbReference type="InterPro" id="IPR032821">
    <property type="entry name" value="PKS_assoc"/>
</dbReference>
<dbReference type="InterPro" id="IPR020841">
    <property type="entry name" value="PKS_Beta-ketoAc_synthase_dom"/>
</dbReference>
<dbReference type="InterPro" id="IPR042104">
    <property type="entry name" value="PKS_dehydratase_sf"/>
</dbReference>
<dbReference type="InterPro" id="IPR020807">
    <property type="entry name" value="PKS_DH"/>
</dbReference>
<dbReference type="InterPro" id="IPR049551">
    <property type="entry name" value="PKS_DH_C"/>
</dbReference>
<dbReference type="InterPro" id="IPR049552">
    <property type="entry name" value="PKS_DH_N"/>
</dbReference>
<dbReference type="InterPro" id="IPR013968">
    <property type="entry name" value="PKS_KR"/>
</dbReference>
<dbReference type="InterPro" id="IPR049900">
    <property type="entry name" value="PKS_mFAS_DH"/>
</dbReference>
<dbReference type="InterPro" id="IPR050091">
    <property type="entry name" value="PKS_NRPS_Biosynth_Enz"/>
</dbReference>
<dbReference type="InterPro" id="IPR020806">
    <property type="entry name" value="PKS_PP-bd"/>
</dbReference>
<dbReference type="InterPro" id="IPR020802">
    <property type="entry name" value="PKS_thioesterase"/>
</dbReference>
<dbReference type="InterPro" id="IPR036299">
    <property type="entry name" value="Polyketide_synth_docking_sf"/>
</dbReference>
<dbReference type="InterPro" id="IPR009081">
    <property type="entry name" value="PP-bd_ACP"/>
</dbReference>
<dbReference type="InterPro" id="IPR006162">
    <property type="entry name" value="Ppantetheine_attach_site"/>
</dbReference>
<dbReference type="InterPro" id="IPR055123">
    <property type="entry name" value="SpnB-like_Rossmann"/>
</dbReference>
<dbReference type="InterPro" id="IPR001031">
    <property type="entry name" value="Thioesterase"/>
</dbReference>
<dbReference type="InterPro" id="IPR016039">
    <property type="entry name" value="Thiolase-like"/>
</dbReference>
<dbReference type="PANTHER" id="PTHR43775">
    <property type="entry name" value="FATTY ACID SYNTHASE"/>
    <property type="match status" value="1"/>
</dbReference>
<dbReference type="PANTHER" id="PTHR43775:SF51">
    <property type="entry name" value="INACTIVE PHENOLPHTHIOCEROL SYNTHESIS POLYKETIDE SYNTHASE TYPE I PKS1-RELATED"/>
    <property type="match status" value="1"/>
</dbReference>
<dbReference type="Pfam" id="PF00698">
    <property type="entry name" value="Acyl_transf_1"/>
    <property type="match status" value="2"/>
</dbReference>
<dbReference type="Pfam" id="PF08990">
    <property type="entry name" value="Docking"/>
    <property type="match status" value="1"/>
</dbReference>
<dbReference type="Pfam" id="PF16197">
    <property type="entry name" value="KAsynt_C_assoc"/>
    <property type="match status" value="2"/>
</dbReference>
<dbReference type="Pfam" id="PF00109">
    <property type="entry name" value="ketoacyl-synt"/>
    <property type="match status" value="2"/>
</dbReference>
<dbReference type="Pfam" id="PF02801">
    <property type="entry name" value="Ketoacyl-synt_C"/>
    <property type="match status" value="2"/>
</dbReference>
<dbReference type="Pfam" id="PF08659">
    <property type="entry name" value="KR"/>
    <property type="match status" value="2"/>
</dbReference>
<dbReference type="Pfam" id="PF21089">
    <property type="entry name" value="PKS_DH_N"/>
    <property type="match status" value="2"/>
</dbReference>
<dbReference type="Pfam" id="PF00550">
    <property type="entry name" value="PP-binding"/>
    <property type="match status" value="2"/>
</dbReference>
<dbReference type="Pfam" id="PF14765">
    <property type="entry name" value="PS-DH"/>
    <property type="match status" value="2"/>
</dbReference>
<dbReference type="Pfam" id="PF22953">
    <property type="entry name" value="SpnB_Rossmann"/>
    <property type="match status" value="2"/>
</dbReference>
<dbReference type="Pfam" id="PF00975">
    <property type="entry name" value="Thioesterase"/>
    <property type="match status" value="1"/>
</dbReference>
<dbReference type="SMART" id="SM00827">
    <property type="entry name" value="PKS_AT"/>
    <property type="match status" value="2"/>
</dbReference>
<dbReference type="SMART" id="SM00826">
    <property type="entry name" value="PKS_DH"/>
    <property type="match status" value="2"/>
</dbReference>
<dbReference type="SMART" id="SM00822">
    <property type="entry name" value="PKS_KR"/>
    <property type="match status" value="2"/>
</dbReference>
<dbReference type="SMART" id="SM00825">
    <property type="entry name" value="PKS_KS"/>
    <property type="match status" value="2"/>
</dbReference>
<dbReference type="SMART" id="SM00823">
    <property type="entry name" value="PKS_PP"/>
    <property type="match status" value="2"/>
</dbReference>
<dbReference type="SMART" id="SM01294">
    <property type="entry name" value="PKS_PP_betabranch"/>
    <property type="match status" value="2"/>
</dbReference>
<dbReference type="SMART" id="SM00824">
    <property type="entry name" value="PKS_TE"/>
    <property type="match status" value="1"/>
</dbReference>
<dbReference type="SUPFAM" id="SSF47336">
    <property type="entry name" value="ACP-like"/>
    <property type="match status" value="1"/>
</dbReference>
<dbReference type="SUPFAM" id="SSF53474">
    <property type="entry name" value="alpha/beta-Hydrolases"/>
    <property type="match status" value="1"/>
</dbReference>
<dbReference type="SUPFAM" id="SSF101173">
    <property type="entry name" value="Docking domain B of the erythromycin polyketide synthase (DEBS)"/>
    <property type="match status" value="1"/>
</dbReference>
<dbReference type="SUPFAM" id="SSF52151">
    <property type="entry name" value="FabD/lysophospholipase-like"/>
    <property type="match status" value="2"/>
</dbReference>
<dbReference type="SUPFAM" id="SSF51735">
    <property type="entry name" value="NAD(P)-binding Rossmann-fold domains"/>
    <property type="match status" value="4"/>
</dbReference>
<dbReference type="SUPFAM" id="SSF55048">
    <property type="entry name" value="Probable ACP-binding domain of malonyl-CoA ACP transacylase"/>
    <property type="match status" value="2"/>
</dbReference>
<dbReference type="SUPFAM" id="SSF53901">
    <property type="entry name" value="Thiolase-like"/>
    <property type="match status" value="2"/>
</dbReference>
<dbReference type="PROSITE" id="PS50075">
    <property type="entry name" value="CARRIER"/>
    <property type="match status" value="2"/>
</dbReference>
<dbReference type="PROSITE" id="PS00606">
    <property type="entry name" value="KS3_1"/>
    <property type="match status" value="2"/>
</dbReference>
<dbReference type="PROSITE" id="PS52004">
    <property type="entry name" value="KS3_2"/>
    <property type="match status" value="2"/>
</dbReference>
<dbReference type="PROSITE" id="PS00012">
    <property type="entry name" value="PHOSPHOPANTETHEINE"/>
    <property type="match status" value="2"/>
</dbReference>
<dbReference type="PROSITE" id="PS52019">
    <property type="entry name" value="PKS_MFAS_DH"/>
    <property type="match status" value="2"/>
</dbReference>
<comment type="function">
    <text evidence="7 12">Fifth protein in the synthesis of the 16-membered macrolide antibiotics FD-891 and FD-892 (PubMed:20589823). Composed of 2 modules (PubMed:20589823). Modifies the product of GfsD by multiple rounds of addition of methylmalonyl-CoA and other modifications to help generate the final products (Probable) (PubMed:20589823).</text>
</comment>
<comment type="cofactor">
    <cofactor evidence="3">
        <name>pantetheine 4'-phosphate</name>
        <dbReference type="ChEBI" id="CHEBI:47942"/>
    </cofactor>
    <text evidence="3">Binds 2 phosphopantetheines covalently.</text>
</comment>
<comment type="pathway">
    <text evidence="12">Antibiotic biosynthesis.</text>
</comment>
<comment type="domain">
    <text evidence="12">Type I modular polyketide synthases (PKS) catalyze the step-wise condensation of simple carboxylic acid derivatives. Type I PKSs are arranged into modules, where each module is comprised of a set of catalytic activities responsible for a single elongation of the polyketide chain and the appropriate reductive processing of the beta-keto functionality. A minimal elongation module contains a ketosynthase (KS) domain, an acyl transferase (AT) domain, and an acyl-carrier protein (ACP) domain. Optional modification (ketoreductase, dehydratase and enoylreductase) domains may also be present.</text>
</comment>
<comment type="miscellaneous">
    <text evidence="8 9">The macrolide antibiotics FD-891 and FD-892 induce morphological changes of human promyelocytic leukemia (HL-60) cells and have cytocidal activity against tumor cell lines in vitro (PubMed:8002384). FD-891 produced by Streptomyces sp. MAFF 225003 and MAFF 225006 inhibits growth of rice and alfalfa seedlings and may cause russet scab in potatoes (Ref.4).</text>
</comment>
<reference evidence="13" key="1">
    <citation type="journal article" date="2010" name="ChemBioChem">
        <title>Cloning and characterization of the biosynthetic gene cluster of 16-membered macrolide antibiotic FD-891: involvement of a dual functional cytochrome P450 monooxygenase catalyzing epoxidation and hydroxylation.</title>
        <authorList>
            <person name="Kudo F."/>
            <person name="Motegi A."/>
            <person name="Mizoue K."/>
            <person name="Eguchi T."/>
        </authorList>
    </citation>
    <scope>NUCLEOTIDE SEQUENCE [GENOMIC DNA]</scope>
    <source>
        <strain>A-8890</strain>
    </source>
</reference>
<reference key="2">
    <citation type="journal article" date="2010" name="ChemBioChem">
        <authorList>
            <person name="Kudo F."/>
            <person name="Motegi A."/>
            <person name="Mizoue K."/>
            <person name="Eguchi T."/>
        </authorList>
    </citation>
    <scope>ERRATUM OF PUBMED:20589823</scope>
</reference>
<reference key="3">
    <citation type="journal article" date="1994" name="J. Antibiot.">
        <title>Isolation and characterization of new 18-membered macrolides FD-891 and FD-892.</title>
        <authorList>
            <person name="Seki-Asano M."/>
            <person name="Okazaki T."/>
            <person name="Yamagishi M."/>
            <person name="Sakai N."/>
            <person name="Hanada K."/>
            <person name="Mizoue K."/>
        </authorList>
    </citation>
    <scope>ANTIBIOTIC ISOLATION AND ACTIVITY CHARACTERIZATION AGAINST HUMAN CELL LINES</scope>
    <source>
        <strain>A-8890</strain>
    </source>
</reference>
<reference key="4">
    <citation type="journal article" date="2005" name="J. Gen. Plant Pathol.">
        <title>Phytotoxin produced by Streptomyces sp. causing potato russet scab in Japan.</title>
        <authorList>
            <person name="Natsume M."/>
            <person name="Komiya M."/>
            <person name="Koyanagi F."/>
            <person name="Tashiro N."/>
            <person name="Kawaide H."/>
            <person name="Abe H."/>
        </authorList>
    </citation>
    <scope>ANTIBIOTIC ISOLATION AND ACTIVITY CHARACTERIZATION AGAINST PLANTS</scope>
</reference>
<name>GFSE_STRHA</name>
<protein>
    <recommendedName>
        <fullName evidence="11">Polyketide synthase GfsE</fullName>
        <ecNumber evidence="1">2.3.1.-</ecNumber>
    </recommendedName>
    <alternativeName>
        <fullName>FD-891 synthase GfsE, modules 11 and 12</fullName>
    </alternativeName>
</protein>
<keyword id="KW-0012">Acyltransferase</keyword>
<keyword id="KW-0045">Antibiotic biosynthesis</keyword>
<keyword id="KW-0511">Multifunctional enzyme</keyword>
<keyword id="KW-0596">Phosphopantetheine</keyword>
<keyword id="KW-0597">Phosphoprotein</keyword>
<keyword id="KW-0677">Repeat</keyword>
<keyword id="KW-0808">Transferase</keyword>